<protein>
    <recommendedName>
        <fullName evidence="1">Small ribosomal subunit protein bS20</fullName>
    </recommendedName>
    <alternativeName>
        <fullName evidence="3">30S ribosomal protein S20</fullName>
    </alternativeName>
</protein>
<comment type="function">
    <text evidence="1">Binds directly to 16S ribosomal RNA.</text>
</comment>
<comment type="similarity">
    <text evidence="1">Belongs to the bacterial ribosomal protein bS20 family.</text>
</comment>
<organism>
    <name type="scientific">Burkholderia cenocepacia (strain ATCC BAA-245 / DSM 16553 / LMG 16656 / NCTC 13227 / J2315 / CF5610)</name>
    <name type="common">Burkholderia cepacia (strain J2315)</name>
    <dbReference type="NCBI Taxonomy" id="216591"/>
    <lineage>
        <taxon>Bacteria</taxon>
        <taxon>Pseudomonadati</taxon>
        <taxon>Pseudomonadota</taxon>
        <taxon>Betaproteobacteria</taxon>
        <taxon>Burkholderiales</taxon>
        <taxon>Burkholderiaceae</taxon>
        <taxon>Burkholderia</taxon>
        <taxon>Burkholderia cepacia complex</taxon>
    </lineage>
</organism>
<accession>B4E9G4</accession>
<feature type="chain" id="PRO_1000126411" description="Small ribosomal subunit protein bS20">
    <location>
        <begin position="1"/>
        <end position="90"/>
    </location>
</feature>
<feature type="region of interest" description="Disordered" evidence="2">
    <location>
        <begin position="1"/>
        <end position="25"/>
    </location>
</feature>
<reference key="1">
    <citation type="journal article" date="2009" name="J. Bacteriol.">
        <title>The genome of Burkholderia cenocepacia J2315, an epidemic pathogen of cystic fibrosis patients.</title>
        <authorList>
            <person name="Holden M.T."/>
            <person name="Seth-Smith H.M."/>
            <person name="Crossman L.C."/>
            <person name="Sebaihia M."/>
            <person name="Bentley S.D."/>
            <person name="Cerdeno-Tarraga A.M."/>
            <person name="Thomson N.R."/>
            <person name="Bason N."/>
            <person name="Quail M.A."/>
            <person name="Sharp S."/>
            <person name="Cherevach I."/>
            <person name="Churcher C."/>
            <person name="Goodhead I."/>
            <person name="Hauser H."/>
            <person name="Holroyd N."/>
            <person name="Mungall K."/>
            <person name="Scott P."/>
            <person name="Walker D."/>
            <person name="White B."/>
            <person name="Rose H."/>
            <person name="Iversen P."/>
            <person name="Mil-Homens D."/>
            <person name="Rocha E.P."/>
            <person name="Fialho A.M."/>
            <person name="Baldwin A."/>
            <person name="Dowson C."/>
            <person name="Barrell B.G."/>
            <person name="Govan J.R."/>
            <person name="Vandamme P."/>
            <person name="Hart C.A."/>
            <person name="Mahenthiralingam E."/>
            <person name="Parkhill J."/>
        </authorList>
    </citation>
    <scope>NUCLEOTIDE SEQUENCE [LARGE SCALE GENOMIC DNA]</scope>
    <source>
        <strain>ATCC BAA-245 / DSM 16553 / LMG 16656 / NCTC 13227 / J2315 / CF5610</strain>
    </source>
</reference>
<name>RS20_BURCJ</name>
<proteinExistence type="inferred from homology"/>
<keyword id="KW-0687">Ribonucleoprotein</keyword>
<keyword id="KW-0689">Ribosomal protein</keyword>
<keyword id="KW-0694">RNA-binding</keyword>
<keyword id="KW-0699">rRNA-binding</keyword>
<sequence>MANSAQARKRARQAAKANSHNSALRSKFRTAIKSVRKAVEAGDQAKAAELFKAAVKTIDTIADKKIVHKNKAARSKSRLAAAVKGLQAAA</sequence>
<evidence type="ECO:0000255" key="1">
    <source>
        <dbReference type="HAMAP-Rule" id="MF_00500"/>
    </source>
</evidence>
<evidence type="ECO:0000256" key="2">
    <source>
        <dbReference type="SAM" id="MobiDB-lite"/>
    </source>
</evidence>
<evidence type="ECO:0000305" key="3"/>
<dbReference type="EMBL" id="AM747720">
    <property type="protein sequence ID" value="CAR53065.1"/>
    <property type="molecule type" value="Genomic_DNA"/>
</dbReference>
<dbReference type="RefSeq" id="WP_006482211.1">
    <property type="nucleotide sequence ID" value="NC_011000.1"/>
</dbReference>
<dbReference type="SMR" id="B4E9G4"/>
<dbReference type="GeneID" id="98106158"/>
<dbReference type="KEGG" id="bcj:BCAL2765"/>
<dbReference type="eggNOG" id="COG0268">
    <property type="taxonomic scope" value="Bacteria"/>
</dbReference>
<dbReference type="HOGENOM" id="CLU_160655_4_0_4"/>
<dbReference type="BioCyc" id="BCEN216591:G1G1V-3063-MONOMER"/>
<dbReference type="Proteomes" id="UP000001035">
    <property type="component" value="Chromosome 1"/>
</dbReference>
<dbReference type="GO" id="GO:0005829">
    <property type="term" value="C:cytosol"/>
    <property type="evidence" value="ECO:0007669"/>
    <property type="project" value="TreeGrafter"/>
</dbReference>
<dbReference type="GO" id="GO:0015935">
    <property type="term" value="C:small ribosomal subunit"/>
    <property type="evidence" value="ECO:0007669"/>
    <property type="project" value="TreeGrafter"/>
</dbReference>
<dbReference type="GO" id="GO:0070181">
    <property type="term" value="F:small ribosomal subunit rRNA binding"/>
    <property type="evidence" value="ECO:0007669"/>
    <property type="project" value="TreeGrafter"/>
</dbReference>
<dbReference type="GO" id="GO:0003735">
    <property type="term" value="F:structural constituent of ribosome"/>
    <property type="evidence" value="ECO:0007669"/>
    <property type="project" value="InterPro"/>
</dbReference>
<dbReference type="GO" id="GO:0006412">
    <property type="term" value="P:translation"/>
    <property type="evidence" value="ECO:0007669"/>
    <property type="project" value="UniProtKB-UniRule"/>
</dbReference>
<dbReference type="FunFam" id="1.20.58.110:FF:000001">
    <property type="entry name" value="30S ribosomal protein S20"/>
    <property type="match status" value="1"/>
</dbReference>
<dbReference type="Gene3D" id="1.20.58.110">
    <property type="entry name" value="Ribosomal protein S20"/>
    <property type="match status" value="1"/>
</dbReference>
<dbReference type="HAMAP" id="MF_00500">
    <property type="entry name" value="Ribosomal_bS20"/>
    <property type="match status" value="1"/>
</dbReference>
<dbReference type="InterPro" id="IPR002583">
    <property type="entry name" value="Ribosomal_bS20"/>
</dbReference>
<dbReference type="InterPro" id="IPR036510">
    <property type="entry name" value="Ribosomal_bS20_sf"/>
</dbReference>
<dbReference type="NCBIfam" id="TIGR00029">
    <property type="entry name" value="S20"/>
    <property type="match status" value="1"/>
</dbReference>
<dbReference type="PANTHER" id="PTHR33398">
    <property type="entry name" value="30S RIBOSOMAL PROTEIN S20"/>
    <property type="match status" value="1"/>
</dbReference>
<dbReference type="PANTHER" id="PTHR33398:SF1">
    <property type="entry name" value="SMALL RIBOSOMAL SUBUNIT PROTEIN BS20C"/>
    <property type="match status" value="1"/>
</dbReference>
<dbReference type="Pfam" id="PF01649">
    <property type="entry name" value="Ribosomal_S20p"/>
    <property type="match status" value="1"/>
</dbReference>
<dbReference type="SUPFAM" id="SSF46992">
    <property type="entry name" value="Ribosomal protein S20"/>
    <property type="match status" value="1"/>
</dbReference>
<gene>
    <name evidence="1" type="primary">rpsT</name>
    <name type="ordered locus">BceJ2315_27030</name>
    <name type="ORF">BCAL2765</name>
</gene>